<organism>
    <name type="scientific">Homo sapiens</name>
    <name type="common">Human</name>
    <dbReference type="NCBI Taxonomy" id="9606"/>
    <lineage>
        <taxon>Eukaryota</taxon>
        <taxon>Metazoa</taxon>
        <taxon>Chordata</taxon>
        <taxon>Craniata</taxon>
        <taxon>Vertebrata</taxon>
        <taxon>Euteleostomi</taxon>
        <taxon>Mammalia</taxon>
        <taxon>Eutheria</taxon>
        <taxon>Euarchontoglires</taxon>
        <taxon>Primates</taxon>
        <taxon>Haplorrhini</taxon>
        <taxon>Catarrhini</taxon>
        <taxon>Hominidae</taxon>
        <taxon>Homo</taxon>
    </lineage>
</organism>
<name>EFMT1_HUMAN</name>
<feature type="initiator methionine" description="Removed" evidence="7">
    <location>
        <position position="1"/>
    </location>
</feature>
<feature type="chain" id="PRO_0000311294" description="EEF1A lysine methyltransferase 1">
    <location>
        <begin position="2"/>
        <end position="214"/>
    </location>
</feature>
<feature type="modified residue" description="N-acetylserine" evidence="7">
    <location>
        <position position="2"/>
    </location>
</feature>
<feature type="modified residue" description="Phosphoserine" evidence="8">
    <location>
        <position position="2"/>
    </location>
</feature>
<feature type="sequence variant" id="VAR_037216" description="In dbSNP:rs11549810.">
    <original>T</original>
    <variation>N</variation>
    <location>
        <position position="193"/>
    </location>
</feature>
<comment type="function">
    <text evidence="1 2 3">Protein N-lysine methyltransferase that selectively catalyzes the trimethylation of EEF1A at 'Lys-79'.</text>
</comment>
<comment type="catalytic activity">
    <reaction evidence="2 3">
        <text>L-lysyl-[protein] + 3 S-adenosyl-L-methionine = N(6),N(6),N(6)-trimethyl-L-lysyl-[protein] + 3 S-adenosyl-L-homocysteine + 3 H(+)</text>
        <dbReference type="Rhea" id="RHEA:54192"/>
        <dbReference type="Rhea" id="RHEA-COMP:9752"/>
        <dbReference type="Rhea" id="RHEA-COMP:13826"/>
        <dbReference type="ChEBI" id="CHEBI:15378"/>
        <dbReference type="ChEBI" id="CHEBI:29969"/>
        <dbReference type="ChEBI" id="CHEBI:57856"/>
        <dbReference type="ChEBI" id="CHEBI:59789"/>
        <dbReference type="ChEBI" id="CHEBI:61961"/>
    </reaction>
    <physiologicalReaction direction="left-to-right" evidence="5">
        <dbReference type="Rhea" id="RHEA:54193"/>
    </physiologicalReaction>
</comment>
<comment type="subcellular location">
    <subcellularLocation>
        <location evidence="1">Cytoplasm</location>
    </subcellularLocation>
</comment>
<comment type="similarity">
    <text evidence="1">Belongs to the class I-like SAM-binding methyltransferase superfamily. EFM5 family.</text>
</comment>
<comment type="caution">
    <text evidence="1">Was originally thought to be an N(6)-adenine-specific DNA methyltransferase based on primary sequence and predicted secondary structure.</text>
</comment>
<protein>
    <recommendedName>
        <fullName evidence="1 6">EEF1A lysine methyltransferase 1</fullName>
        <ecNumber evidence="1 2 3">2.1.1.-</ecNumber>
    </recommendedName>
    <alternativeName>
        <fullName evidence="1">N(6)-adenine-specific DNA methyltransferase 2</fullName>
    </alternativeName>
    <alternativeName>
        <fullName evidence="1">Protein-lysine N-methyltransferase N6AMT2</fullName>
    </alternativeName>
    <alternativeName>
        <fullName evidence="4">eEF1A-KMT</fullName>
    </alternativeName>
</protein>
<evidence type="ECO:0000255" key="1">
    <source>
        <dbReference type="HAMAP-Rule" id="MF_03187"/>
    </source>
</evidence>
<evidence type="ECO:0000269" key="2">
    <source>
    </source>
</evidence>
<evidence type="ECO:0000269" key="3">
    <source>
    </source>
</evidence>
<evidence type="ECO:0000303" key="4">
    <source>
    </source>
</evidence>
<evidence type="ECO:0000305" key="5">
    <source>
    </source>
</evidence>
<evidence type="ECO:0000312" key="6">
    <source>
        <dbReference type="HGNC" id="HGNC:27351"/>
    </source>
</evidence>
<evidence type="ECO:0007744" key="7">
    <source>
    </source>
</evidence>
<evidence type="ECO:0007744" key="8">
    <source>
    </source>
</evidence>
<sequence>MSDLEDDETPQLSAHALAALQEFYAEQKQQIEPGEDDKYNIGIIEENWQLSQFWYSQETALQLAQEAIAAVGEGGRIACVSAPSVYQKLRELCRENFSIYIFEYDKRFAMYGEEFIFYDYNNPLDLPERIAAHSFDIVIADPPYLSEECLRKTSETVKYLTRGKILLCTGAIMEEQAAELLGVKMCTFVPRHTRNLANEFRCYVNYDSGLDCGI</sequence>
<dbReference type="EC" id="2.1.1.-" evidence="1 2 3"/>
<dbReference type="EMBL" id="DQ823637">
    <property type="protein sequence ID" value="ABK41021.1"/>
    <property type="molecule type" value="mRNA"/>
</dbReference>
<dbReference type="EMBL" id="AL512652">
    <property type="status" value="NOT_ANNOTATED_CDS"/>
    <property type="molecule type" value="Genomic_DNA"/>
</dbReference>
<dbReference type="EMBL" id="CH471075">
    <property type="protein sequence ID" value="EAX08277.1"/>
    <property type="molecule type" value="Genomic_DNA"/>
</dbReference>
<dbReference type="EMBL" id="BC018091">
    <property type="protein sequence ID" value="AAH18091.1"/>
    <property type="molecule type" value="mRNA"/>
</dbReference>
<dbReference type="CCDS" id="CCDS9293.1"/>
<dbReference type="RefSeq" id="NP_001305868.1">
    <property type="nucleotide sequence ID" value="NM_001318939.2"/>
</dbReference>
<dbReference type="RefSeq" id="NP_777588.1">
    <property type="nucleotide sequence ID" value="NM_174928.3"/>
</dbReference>
<dbReference type="RefSeq" id="XP_016875921.1">
    <property type="nucleotide sequence ID" value="XM_017020432.2"/>
</dbReference>
<dbReference type="RefSeq" id="XP_054230180.1">
    <property type="nucleotide sequence ID" value="XM_054374205.1"/>
</dbReference>
<dbReference type="SMR" id="Q8WVE0"/>
<dbReference type="BioGRID" id="128690">
    <property type="interactions" value="11"/>
</dbReference>
<dbReference type="FunCoup" id="Q8WVE0">
    <property type="interactions" value="899"/>
</dbReference>
<dbReference type="IntAct" id="Q8WVE0">
    <property type="interactions" value="6"/>
</dbReference>
<dbReference type="STRING" id="9606.ENSP00000372206"/>
<dbReference type="iPTMnet" id="Q8WVE0"/>
<dbReference type="PhosphoSitePlus" id="Q8WVE0"/>
<dbReference type="BioMuta" id="EEF1AKMT1"/>
<dbReference type="DMDM" id="74751547"/>
<dbReference type="jPOST" id="Q8WVE0"/>
<dbReference type="MassIVE" id="Q8WVE0"/>
<dbReference type="PaxDb" id="9606-ENSP00000372206"/>
<dbReference type="PeptideAtlas" id="Q8WVE0"/>
<dbReference type="ProteomicsDB" id="74781"/>
<dbReference type="Pumba" id="Q8WVE0"/>
<dbReference type="Antibodypedia" id="22330">
    <property type="antibodies" value="82 antibodies from 15 providers"/>
</dbReference>
<dbReference type="DNASU" id="221143"/>
<dbReference type="Ensembl" id="ENST00000382754.4">
    <property type="protein sequence ID" value="ENSP00000372202.4"/>
    <property type="gene ID" value="ENSG00000150456.11"/>
</dbReference>
<dbReference type="Ensembl" id="ENST00000382758.6">
    <property type="protein sequence ID" value="ENSP00000372206.1"/>
    <property type="gene ID" value="ENSG00000150456.11"/>
</dbReference>
<dbReference type="GeneID" id="221143"/>
<dbReference type="KEGG" id="hsa:221143"/>
<dbReference type="MANE-Select" id="ENST00000382758.6">
    <property type="protein sequence ID" value="ENSP00000372206.1"/>
    <property type="RefSeq nucleotide sequence ID" value="NM_001318939.2"/>
    <property type="RefSeq protein sequence ID" value="NP_001305868.1"/>
</dbReference>
<dbReference type="UCSC" id="uc001uno.2">
    <property type="organism name" value="human"/>
</dbReference>
<dbReference type="AGR" id="HGNC:27351"/>
<dbReference type="CTD" id="221143"/>
<dbReference type="DisGeNET" id="221143"/>
<dbReference type="GeneCards" id="EEF1AKMT1"/>
<dbReference type="HGNC" id="HGNC:27351">
    <property type="gene designation" value="EEF1AKMT1"/>
</dbReference>
<dbReference type="HPA" id="ENSG00000150456">
    <property type="expression patterns" value="Low tissue specificity"/>
</dbReference>
<dbReference type="MIM" id="617793">
    <property type="type" value="gene"/>
</dbReference>
<dbReference type="neXtProt" id="NX_Q8WVE0"/>
<dbReference type="OpenTargets" id="ENSG00000150456"/>
<dbReference type="PharmGKB" id="PA162396671"/>
<dbReference type="VEuPathDB" id="HostDB:ENSG00000150456"/>
<dbReference type="eggNOG" id="KOG3350">
    <property type="taxonomic scope" value="Eukaryota"/>
</dbReference>
<dbReference type="GeneTree" id="ENSGT00390000016366"/>
<dbReference type="HOGENOM" id="CLU_074410_2_1_1"/>
<dbReference type="InParanoid" id="Q8WVE0"/>
<dbReference type="OMA" id="CNFRPEH"/>
<dbReference type="OrthoDB" id="206354at2759"/>
<dbReference type="PAN-GO" id="Q8WVE0">
    <property type="GO annotations" value="0 GO annotations based on evolutionary models"/>
</dbReference>
<dbReference type="PhylomeDB" id="Q8WVE0"/>
<dbReference type="TreeFam" id="TF106153"/>
<dbReference type="BRENDA" id="2.1.1.244">
    <property type="organism ID" value="2681"/>
</dbReference>
<dbReference type="PathwayCommons" id="Q8WVE0"/>
<dbReference type="Reactome" id="R-HSA-8876725">
    <property type="pathway name" value="Protein methylation"/>
</dbReference>
<dbReference type="SignaLink" id="Q8WVE0"/>
<dbReference type="BioGRID-ORCS" id="221143">
    <property type="hits" value="15 hits in 1137 CRISPR screens"/>
</dbReference>
<dbReference type="GenomeRNAi" id="221143"/>
<dbReference type="Pharos" id="Q8WVE0">
    <property type="development level" value="Tbio"/>
</dbReference>
<dbReference type="PRO" id="PR:Q8WVE0"/>
<dbReference type="Proteomes" id="UP000005640">
    <property type="component" value="Chromosome 13"/>
</dbReference>
<dbReference type="RNAct" id="Q8WVE0">
    <property type="molecule type" value="protein"/>
</dbReference>
<dbReference type="Bgee" id="ENSG00000150456">
    <property type="expression patterns" value="Expressed in male germ line stem cell (sensu Vertebrata) in testis and 182 other cell types or tissues"/>
</dbReference>
<dbReference type="ExpressionAtlas" id="Q8WVE0">
    <property type="expression patterns" value="baseline and differential"/>
</dbReference>
<dbReference type="GO" id="GO:0005829">
    <property type="term" value="C:cytosol"/>
    <property type="evidence" value="ECO:0000304"/>
    <property type="project" value="Reactome"/>
</dbReference>
<dbReference type="GO" id="GO:0008168">
    <property type="term" value="F:methyltransferase activity"/>
    <property type="evidence" value="ECO:0000314"/>
    <property type="project" value="UniProtKB"/>
</dbReference>
<dbReference type="GO" id="GO:0003676">
    <property type="term" value="F:nucleic acid binding"/>
    <property type="evidence" value="ECO:0007669"/>
    <property type="project" value="InterPro"/>
</dbReference>
<dbReference type="GO" id="GO:0016279">
    <property type="term" value="F:protein-lysine N-methyltransferase activity"/>
    <property type="evidence" value="ECO:0000314"/>
    <property type="project" value="UniProtKB"/>
</dbReference>
<dbReference type="GO" id="GO:0018022">
    <property type="term" value="P:peptidyl-lysine methylation"/>
    <property type="evidence" value="ECO:0000314"/>
    <property type="project" value="UniProtKB"/>
</dbReference>
<dbReference type="HAMAP" id="MF_03187">
    <property type="entry name" value="Methyltr_EFM5"/>
    <property type="match status" value="1"/>
</dbReference>
<dbReference type="InterPro" id="IPR002052">
    <property type="entry name" value="DNA_methylase_N6_adenine_CS"/>
</dbReference>
<dbReference type="InterPro" id="IPR019369">
    <property type="entry name" value="Efm5/EEF1AKMT1"/>
</dbReference>
<dbReference type="InterPro" id="IPR041370">
    <property type="entry name" value="Mlase_EEF1AKMT1/ZCCHC4"/>
</dbReference>
<dbReference type="InterPro" id="IPR029063">
    <property type="entry name" value="SAM-dependent_MTases_sf"/>
</dbReference>
<dbReference type="PANTHER" id="PTHR13200">
    <property type="entry name" value="EEF1A LYSINE METHYLTRANSFERASE 1"/>
    <property type="match status" value="1"/>
</dbReference>
<dbReference type="PANTHER" id="PTHR13200:SF0">
    <property type="entry name" value="EEF1A LYSINE METHYLTRANSFERASE 1"/>
    <property type="match status" value="1"/>
</dbReference>
<dbReference type="Pfam" id="PF10237">
    <property type="entry name" value="N6-adenineMlase"/>
    <property type="match status" value="1"/>
</dbReference>
<dbReference type="SUPFAM" id="SSF53335">
    <property type="entry name" value="S-adenosyl-L-methionine-dependent methyltransferases"/>
    <property type="match status" value="1"/>
</dbReference>
<accession>Q8WVE0</accession>
<accession>B5G4V1</accession>
<keyword id="KW-0007">Acetylation</keyword>
<keyword id="KW-0963">Cytoplasm</keyword>
<keyword id="KW-0489">Methyltransferase</keyword>
<keyword id="KW-0597">Phosphoprotein</keyword>
<keyword id="KW-1267">Proteomics identification</keyword>
<keyword id="KW-1185">Reference proteome</keyword>
<keyword id="KW-0808">Transferase</keyword>
<gene>
    <name evidence="1 6" type="primary">EEF1AKMT1</name>
    <name evidence="1" type="synonym">N6AMT2</name>
</gene>
<proteinExistence type="evidence at protein level"/>
<reference key="1">
    <citation type="journal article" date="2008" name="DNA Res.">
        <title>Transcriptome analysis of a cDNA library from adult human epididymis.</title>
        <authorList>
            <person name="Li J.Y."/>
            <person name="Wang H.Y."/>
            <person name="Liu J."/>
            <person name="Liu Q."/>
            <person name="Zhang J.S."/>
            <person name="Wan F.C."/>
            <person name="Liu F.J."/>
            <person name="Jin S.H."/>
            <person name="Zhang Y.L."/>
        </authorList>
    </citation>
    <scope>NUCLEOTIDE SEQUENCE [LARGE SCALE MRNA]</scope>
    <source>
        <tissue>Epididymis</tissue>
    </source>
</reference>
<reference key="2">
    <citation type="journal article" date="2004" name="Nature">
        <title>The DNA sequence and analysis of human chromosome 13.</title>
        <authorList>
            <person name="Dunham A."/>
            <person name="Matthews L.H."/>
            <person name="Burton J."/>
            <person name="Ashurst J.L."/>
            <person name="Howe K.L."/>
            <person name="Ashcroft K.J."/>
            <person name="Beare D.M."/>
            <person name="Burford D.C."/>
            <person name="Hunt S.E."/>
            <person name="Griffiths-Jones S."/>
            <person name="Jones M.C."/>
            <person name="Keenan S.J."/>
            <person name="Oliver K."/>
            <person name="Scott C.E."/>
            <person name="Ainscough R."/>
            <person name="Almeida J.P."/>
            <person name="Ambrose K.D."/>
            <person name="Andrews D.T."/>
            <person name="Ashwell R.I.S."/>
            <person name="Babbage A.K."/>
            <person name="Bagguley C.L."/>
            <person name="Bailey J."/>
            <person name="Bannerjee R."/>
            <person name="Barlow K.F."/>
            <person name="Bates K."/>
            <person name="Beasley H."/>
            <person name="Bird C.P."/>
            <person name="Bray-Allen S."/>
            <person name="Brown A.J."/>
            <person name="Brown J.Y."/>
            <person name="Burrill W."/>
            <person name="Carder C."/>
            <person name="Carter N.P."/>
            <person name="Chapman J.C."/>
            <person name="Clamp M.E."/>
            <person name="Clark S.Y."/>
            <person name="Clarke G."/>
            <person name="Clee C.M."/>
            <person name="Clegg S.C."/>
            <person name="Cobley V."/>
            <person name="Collins J.E."/>
            <person name="Corby N."/>
            <person name="Coville G.J."/>
            <person name="Deloukas P."/>
            <person name="Dhami P."/>
            <person name="Dunham I."/>
            <person name="Dunn M."/>
            <person name="Earthrowl M.E."/>
            <person name="Ellington A.G."/>
            <person name="Faulkner L."/>
            <person name="Frankish A.G."/>
            <person name="Frankland J."/>
            <person name="French L."/>
            <person name="Garner P."/>
            <person name="Garnett J."/>
            <person name="Gilbert J.G.R."/>
            <person name="Gilson C.J."/>
            <person name="Ghori J."/>
            <person name="Grafham D.V."/>
            <person name="Gribble S.M."/>
            <person name="Griffiths C."/>
            <person name="Hall R.E."/>
            <person name="Hammond S."/>
            <person name="Harley J.L."/>
            <person name="Hart E.A."/>
            <person name="Heath P.D."/>
            <person name="Howden P.J."/>
            <person name="Huckle E.J."/>
            <person name="Hunt P.J."/>
            <person name="Hunt A.R."/>
            <person name="Johnson C."/>
            <person name="Johnson D."/>
            <person name="Kay M."/>
            <person name="Kimberley A.M."/>
            <person name="King A."/>
            <person name="Laird G.K."/>
            <person name="Langford C.J."/>
            <person name="Lawlor S."/>
            <person name="Leongamornlert D.A."/>
            <person name="Lloyd D.M."/>
            <person name="Lloyd C."/>
            <person name="Loveland J.E."/>
            <person name="Lovell J."/>
            <person name="Martin S."/>
            <person name="Mashreghi-Mohammadi M."/>
            <person name="McLaren S.J."/>
            <person name="McMurray A."/>
            <person name="Milne S."/>
            <person name="Moore M.J.F."/>
            <person name="Nickerson T."/>
            <person name="Palmer S.A."/>
            <person name="Pearce A.V."/>
            <person name="Peck A.I."/>
            <person name="Pelan S."/>
            <person name="Phillimore B."/>
            <person name="Porter K.M."/>
            <person name="Rice C.M."/>
            <person name="Searle S."/>
            <person name="Sehra H.K."/>
            <person name="Shownkeen R."/>
            <person name="Skuce C.D."/>
            <person name="Smith M."/>
            <person name="Steward C.A."/>
            <person name="Sycamore N."/>
            <person name="Tester J."/>
            <person name="Thomas D.W."/>
            <person name="Tracey A."/>
            <person name="Tromans A."/>
            <person name="Tubby B."/>
            <person name="Wall M."/>
            <person name="Wallis J.M."/>
            <person name="West A.P."/>
            <person name="Whitehead S.L."/>
            <person name="Willey D.L."/>
            <person name="Wilming L."/>
            <person name="Wray P.W."/>
            <person name="Wright M.W."/>
            <person name="Young L."/>
            <person name="Coulson A."/>
            <person name="Durbin R.M."/>
            <person name="Hubbard T."/>
            <person name="Sulston J.E."/>
            <person name="Beck S."/>
            <person name="Bentley D.R."/>
            <person name="Rogers J."/>
            <person name="Ross M.T."/>
        </authorList>
    </citation>
    <scope>NUCLEOTIDE SEQUENCE [LARGE SCALE GENOMIC DNA]</scope>
</reference>
<reference key="3">
    <citation type="submission" date="2005-07" db="EMBL/GenBank/DDBJ databases">
        <authorList>
            <person name="Mural R.J."/>
            <person name="Istrail S."/>
            <person name="Sutton G.G."/>
            <person name="Florea L."/>
            <person name="Halpern A.L."/>
            <person name="Mobarry C.M."/>
            <person name="Lippert R."/>
            <person name="Walenz B."/>
            <person name="Shatkay H."/>
            <person name="Dew I."/>
            <person name="Miller J.R."/>
            <person name="Flanigan M.J."/>
            <person name="Edwards N.J."/>
            <person name="Bolanos R."/>
            <person name="Fasulo D."/>
            <person name="Halldorsson B.V."/>
            <person name="Hannenhalli S."/>
            <person name="Turner R."/>
            <person name="Yooseph S."/>
            <person name="Lu F."/>
            <person name="Nusskern D.R."/>
            <person name="Shue B.C."/>
            <person name="Zheng X.H."/>
            <person name="Zhong F."/>
            <person name="Delcher A.L."/>
            <person name="Huson D.H."/>
            <person name="Kravitz S.A."/>
            <person name="Mouchard L."/>
            <person name="Reinert K."/>
            <person name="Remington K.A."/>
            <person name="Clark A.G."/>
            <person name="Waterman M.S."/>
            <person name="Eichler E.E."/>
            <person name="Adams M.D."/>
            <person name="Hunkapiller M.W."/>
            <person name="Myers E.W."/>
            <person name="Venter J.C."/>
        </authorList>
    </citation>
    <scope>NUCLEOTIDE SEQUENCE [LARGE SCALE GENOMIC DNA]</scope>
</reference>
<reference key="4">
    <citation type="journal article" date="2004" name="Genome Res.">
        <title>The status, quality, and expansion of the NIH full-length cDNA project: the Mammalian Gene Collection (MGC).</title>
        <authorList>
            <consortium name="The MGC Project Team"/>
        </authorList>
    </citation>
    <scope>NUCLEOTIDE SEQUENCE [LARGE SCALE MRNA]</scope>
    <source>
        <tissue>Brain</tissue>
    </source>
</reference>
<reference key="5">
    <citation type="journal article" date="2009" name="Anal. Chem.">
        <title>Lys-N and trypsin cover complementary parts of the phosphoproteome in a refined SCX-based approach.</title>
        <authorList>
            <person name="Gauci S."/>
            <person name="Helbig A.O."/>
            <person name="Slijper M."/>
            <person name="Krijgsveld J."/>
            <person name="Heck A.J."/>
            <person name="Mohammed S."/>
        </authorList>
    </citation>
    <scope>ACETYLATION [LARGE SCALE ANALYSIS] AT SER-2</scope>
    <scope>CLEAVAGE OF INITIATOR METHIONINE [LARGE SCALE ANALYSIS]</scope>
    <scope>IDENTIFICATION BY MASS SPECTROMETRY [LARGE SCALE ANALYSIS]</scope>
</reference>
<reference key="6">
    <citation type="journal article" date="2013" name="J. Proteome Res.">
        <title>Toward a comprehensive characterization of a human cancer cell phosphoproteome.</title>
        <authorList>
            <person name="Zhou H."/>
            <person name="Di Palma S."/>
            <person name="Preisinger C."/>
            <person name="Peng M."/>
            <person name="Polat A.N."/>
            <person name="Heck A.J."/>
            <person name="Mohammed S."/>
        </authorList>
    </citation>
    <scope>PHOSPHORYLATION [LARGE SCALE ANALYSIS] AT SER-2</scope>
    <scope>IDENTIFICATION BY MASS SPECTROMETRY [LARGE SCALE ANALYSIS]</scope>
    <source>
        <tissue>Erythroleukemia</tissue>
    </source>
</reference>
<reference key="7">
    <citation type="journal article" date="2016" name="Mol. Cell. Proteomics">
        <title>Novel N-terminal and lysine methyltransferases that target translation elongation factor 1A in yeast and human.</title>
        <authorList>
            <person name="Hamey J.J."/>
            <person name="Winter D.L."/>
            <person name="Yagoub D."/>
            <person name="Overall C.M."/>
            <person name="Hart-Smith G."/>
            <person name="Wilkins M.R."/>
        </authorList>
    </citation>
    <scope>FUNCTION</scope>
    <scope>CATALYTIC ACTIVITY</scope>
</reference>
<reference key="8">
    <citation type="journal article" date="2017" name="Mol. Cell. Proteomics">
        <title>METTL21B Is a Novel Human Lysine Methyltransferase of Translation Elongation Factor 1A: Discovery by CRISPR/Cas9 Knockout.</title>
        <authorList>
            <person name="Hamey J.J."/>
            <person name="Wienert B."/>
            <person name="Quinlan K.G.R."/>
            <person name="Wilkins M.R."/>
        </authorList>
    </citation>
    <scope>FUNCTION</scope>
    <scope>CATALYTIC ACTIVITY</scope>
</reference>